<proteinExistence type="inferred from homology"/>
<sequence>MPRSRINGNFIDKTSSIVANILLRIIPTTSGEKEAFTYYRDGMSAQSEGNYAEALQNYYEAMRPEIDPYDRSYILYNIGLIHTSNGEHTKALEYYFRALERNPFLPQASNNMAVICHYRGEEAIRQGDSEIAEAWFDQAAEYWKQAIALTPGNYIEAQNWLKITGRFE</sequence>
<accession>A1XFV6</accession>
<dbReference type="EMBL" id="DQ354691">
    <property type="protein sequence ID" value="ABC60459.1"/>
    <property type="molecule type" value="Genomic_DNA"/>
</dbReference>
<dbReference type="RefSeq" id="YP_001001535.1">
    <property type="nucleotide sequence ID" value="NC_008788.1"/>
</dbReference>
<dbReference type="SMR" id="A1XFV6"/>
<dbReference type="GeneID" id="4699656"/>
<dbReference type="GO" id="GO:0009535">
    <property type="term" value="C:chloroplast thylakoid membrane"/>
    <property type="evidence" value="ECO:0007669"/>
    <property type="project" value="UniProtKB-SubCell"/>
</dbReference>
<dbReference type="GO" id="GO:0015979">
    <property type="term" value="P:photosynthesis"/>
    <property type="evidence" value="ECO:0007669"/>
    <property type="project" value="UniProtKB-UniRule"/>
</dbReference>
<dbReference type="FunFam" id="1.25.40.10:FF:000004">
    <property type="entry name" value="Photosystem I assembly protein Ycf3"/>
    <property type="match status" value="1"/>
</dbReference>
<dbReference type="Gene3D" id="1.25.40.10">
    <property type="entry name" value="Tetratricopeptide repeat domain"/>
    <property type="match status" value="1"/>
</dbReference>
<dbReference type="HAMAP" id="MF_00439">
    <property type="entry name" value="Ycf3"/>
    <property type="match status" value="1"/>
</dbReference>
<dbReference type="InterPro" id="IPR022818">
    <property type="entry name" value="PSI_Ycf3_assembly"/>
</dbReference>
<dbReference type="InterPro" id="IPR011990">
    <property type="entry name" value="TPR-like_helical_dom_sf"/>
</dbReference>
<dbReference type="InterPro" id="IPR019734">
    <property type="entry name" value="TPR_rpt"/>
</dbReference>
<dbReference type="InterPro" id="IPR051685">
    <property type="entry name" value="Ycf3/AcsC/BcsC/TPR_MFPF"/>
</dbReference>
<dbReference type="NCBIfam" id="NF002725">
    <property type="entry name" value="PRK02603.1"/>
    <property type="match status" value="1"/>
</dbReference>
<dbReference type="PANTHER" id="PTHR44943">
    <property type="entry name" value="CELLULOSE SYNTHASE OPERON PROTEIN C"/>
    <property type="match status" value="1"/>
</dbReference>
<dbReference type="PANTHER" id="PTHR44943:SF8">
    <property type="entry name" value="TPR REPEAT-CONTAINING PROTEIN MJ0263"/>
    <property type="match status" value="1"/>
</dbReference>
<dbReference type="Pfam" id="PF00515">
    <property type="entry name" value="TPR_1"/>
    <property type="match status" value="1"/>
</dbReference>
<dbReference type="SMART" id="SM00028">
    <property type="entry name" value="TPR"/>
    <property type="match status" value="3"/>
</dbReference>
<dbReference type="SUPFAM" id="SSF48452">
    <property type="entry name" value="TPR-like"/>
    <property type="match status" value="1"/>
</dbReference>
<dbReference type="PROSITE" id="PS50005">
    <property type="entry name" value="TPR"/>
    <property type="match status" value="3"/>
</dbReference>
<dbReference type="PROSITE" id="PS50293">
    <property type="entry name" value="TPR_REGION"/>
    <property type="match status" value="2"/>
</dbReference>
<evidence type="ECO:0000255" key="1">
    <source>
        <dbReference type="HAMAP-Rule" id="MF_00439"/>
    </source>
</evidence>
<feature type="chain" id="PRO_0000325070" description="Photosystem I assembly protein Ycf3">
    <location>
        <begin position="1"/>
        <end position="168"/>
    </location>
</feature>
<feature type="repeat" description="TPR 1">
    <location>
        <begin position="35"/>
        <end position="68"/>
    </location>
</feature>
<feature type="repeat" description="TPR 2">
    <location>
        <begin position="72"/>
        <end position="105"/>
    </location>
</feature>
<feature type="repeat" description="TPR 3">
    <location>
        <begin position="120"/>
        <end position="153"/>
    </location>
</feature>
<geneLocation type="chloroplast"/>
<organism>
    <name type="scientific">Nuphar advena</name>
    <name type="common">Common spatterdock</name>
    <name type="synonym">Nuphar lutea subsp. advena</name>
    <dbReference type="NCBI Taxonomy" id="77108"/>
    <lineage>
        <taxon>Eukaryota</taxon>
        <taxon>Viridiplantae</taxon>
        <taxon>Streptophyta</taxon>
        <taxon>Embryophyta</taxon>
        <taxon>Tracheophyta</taxon>
        <taxon>Spermatophyta</taxon>
        <taxon>Magnoliopsida</taxon>
        <taxon>Nymphaeales</taxon>
        <taxon>Nymphaeaceae</taxon>
        <taxon>Nuphar</taxon>
    </lineage>
</organism>
<reference key="1">
    <citation type="journal article" date="2007" name="BMC Genomics">
        <title>Comparative chloroplast genomics: analyses including new sequences from the angiosperms Nuphar advena and Ranunculus macranthus.</title>
        <authorList>
            <person name="Raubeson L.A."/>
            <person name="Peery R."/>
            <person name="Chumley T.W."/>
            <person name="Dziubek C."/>
            <person name="Fourcade H.M."/>
            <person name="Boore J.L."/>
            <person name="Jansen R.K."/>
        </authorList>
    </citation>
    <scope>NUCLEOTIDE SEQUENCE [LARGE SCALE GENOMIC DNA]</scope>
</reference>
<protein>
    <recommendedName>
        <fullName evidence="1">Photosystem I assembly protein Ycf3</fullName>
    </recommendedName>
</protein>
<comment type="function">
    <text evidence="1">Essential for the assembly of the photosystem I (PSI) complex. May act as a chaperone-like factor to guide the assembly of the PSI subunits.</text>
</comment>
<comment type="subcellular location">
    <subcellularLocation>
        <location evidence="1">Plastid</location>
        <location evidence="1">Chloroplast thylakoid membrane</location>
        <topology evidence="1">Peripheral membrane protein</topology>
    </subcellularLocation>
</comment>
<comment type="similarity">
    <text evidence="1">Belongs to the Ycf3 family.</text>
</comment>
<name>YCF3_NUPAD</name>
<keyword id="KW-0150">Chloroplast</keyword>
<keyword id="KW-0472">Membrane</keyword>
<keyword id="KW-0602">Photosynthesis</keyword>
<keyword id="KW-0934">Plastid</keyword>
<keyword id="KW-0677">Repeat</keyword>
<keyword id="KW-0793">Thylakoid</keyword>
<keyword id="KW-0802">TPR repeat</keyword>
<gene>
    <name evidence="1" type="primary">ycf3</name>
</gene>